<gene>
    <name evidence="1" type="primary">ubiE</name>
    <name type="ordered locus">PM1686</name>
</gene>
<accession>Q9CKD6</accession>
<proteinExistence type="inferred from homology"/>
<dbReference type="EC" id="2.1.1.163" evidence="1"/>
<dbReference type="EC" id="2.1.1.201" evidence="1"/>
<dbReference type="EMBL" id="AE004439">
    <property type="protein sequence ID" value="AAK03770.1"/>
    <property type="molecule type" value="Genomic_DNA"/>
</dbReference>
<dbReference type="SMR" id="Q9CKD6"/>
<dbReference type="STRING" id="272843.PM1686"/>
<dbReference type="EnsemblBacteria" id="AAK03770">
    <property type="protein sequence ID" value="AAK03770"/>
    <property type="gene ID" value="PM1686"/>
</dbReference>
<dbReference type="KEGG" id="pmu:PM1686"/>
<dbReference type="HOGENOM" id="CLU_037990_0_0_6"/>
<dbReference type="UniPathway" id="UPA00079">
    <property type="reaction ID" value="UER00169"/>
</dbReference>
<dbReference type="UniPathway" id="UPA00232"/>
<dbReference type="Proteomes" id="UP000000809">
    <property type="component" value="Chromosome"/>
</dbReference>
<dbReference type="GO" id="GO:0008425">
    <property type="term" value="F:2-methoxy-6-polyprenyl-1,4-benzoquinol methyltransferase activity"/>
    <property type="evidence" value="ECO:0007669"/>
    <property type="project" value="UniProtKB-UniRule"/>
</dbReference>
<dbReference type="GO" id="GO:0043770">
    <property type="term" value="F:demethylmenaquinone methyltransferase activity"/>
    <property type="evidence" value="ECO:0007669"/>
    <property type="project" value="UniProtKB-UniRule"/>
</dbReference>
<dbReference type="GO" id="GO:0009060">
    <property type="term" value="P:aerobic respiration"/>
    <property type="evidence" value="ECO:0007669"/>
    <property type="project" value="UniProtKB-UniRule"/>
</dbReference>
<dbReference type="GO" id="GO:0009234">
    <property type="term" value="P:menaquinone biosynthetic process"/>
    <property type="evidence" value="ECO:0007669"/>
    <property type="project" value="UniProtKB-UniRule"/>
</dbReference>
<dbReference type="GO" id="GO:0032259">
    <property type="term" value="P:methylation"/>
    <property type="evidence" value="ECO:0007669"/>
    <property type="project" value="UniProtKB-KW"/>
</dbReference>
<dbReference type="CDD" id="cd02440">
    <property type="entry name" value="AdoMet_MTases"/>
    <property type="match status" value="1"/>
</dbReference>
<dbReference type="FunFam" id="3.40.50.150:FF:000014">
    <property type="entry name" value="Ubiquinone/menaquinone biosynthesis C-methyltransferase UbiE"/>
    <property type="match status" value="1"/>
</dbReference>
<dbReference type="Gene3D" id="3.40.50.150">
    <property type="entry name" value="Vaccinia Virus protein VP39"/>
    <property type="match status" value="1"/>
</dbReference>
<dbReference type="HAMAP" id="MF_01813">
    <property type="entry name" value="MenG_UbiE_methyltr"/>
    <property type="match status" value="1"/>
</dbReference>
<dbReference type="InterPro" id="IPR029063">
    <property type="entry name" value="SAM-dependent_MTases_sf"/>
</dbReference>
<dbReference type="InterPro" id="IPR004033">
    <property type="entry name" value="UbiE/COQ5_MeTrFase"/>
</dbReference>
<dbReference type="InterPro" id="IPR023576">
    <property type="entry name" value="UbiE/COQ5_MeTrFase_CS"/>
</dbReference>
<dbReference type="NCBIfam" id="TIGR01934">
    <property type="entry name" value="MenG_MenH_UbiE"/>
    <property type="match status" value="1"/>
</dbReference>
<dbReference type="NCBIfam" id="NF001240">
    <property type="entry name" value="PRK00216.1-1"/>
    <property type="match status" value="1"/>
</dbReference>
<dbReference type="NCBIfam" id="NF001242">
    <property type="entry name" value="PRK00216.1-3"/>
    <property type="match status" value="1"/>
</dbReference>
<dbReference type="NCBIfam" id="NF001244">
    <property type="entry name" value="PRK00216.1-5"/>
    <property type="match status" value="1"/>
</dbReference>
<dbReference type="PANTHER" id="PTHR43591:SF24">
    <property type="entry name" value="2-METHOXY-6-POLYPRENYL-1,4-BENZOQUINOL METHYLASE, MITOCHONDRIAL"/>
    <property type="match status" value="1"/>
</dbReference>
<dbReference type="PANTHER" id="PTHR43591">
    <property type="entry name" value="METHYLTRANSFERASE"/>
    <property type="match status" value="1"/>
</dbReference>
<dbReference type="Pfam" id="PF01209">
    <property type="entry name" value="Ubie_methyltran"/>
    <property type="match status" value="1"/>
</dbReference>
<dbReference type="SUPFAM" id="SSF53335">
    <property type="entry name" value="S-adenosyl-L-methionine-dependent methyltransferases"/>
    <property type="match status" value="1"/>
</dbReference>
<dbReference type="PROSITE" id="PS51608">
    <property type="entry name" value="SAM_MT_UBIE"/>
    <property type="match status" value="1"/>
</dbReference>
<dbReference type="PROSITE" id="PS01183">
    <property type="entry name" value="UBIE_1"/>
    <property type="match status" value="1"/>
</dbReference>
<dbReference type="PROSITE" id="PS01184">
    <property type="entry name" value="UBIE_2"/>
    <property type="match status" value="1"/>
</dbReference>
<name>UBIE_PASMU</name>
<protein>
    <recommendedName>
        <fullName evidence="1">Ubiquinone/menaquinone biosynthesis C-methyltransferase UbiE</fullName>
        <ecNumber evidence="1">2.1.1.163</ecNumber>
        <ecNumber evidence="1">2.1.1.201</ecNumber>
    </recommendedName>
    <alternativeName>
        <fullName evidence="1">2-methoxy-6-polyprenyl-1,4-benzoquinol methylase</fullName>
    </alternativeName>
    <alternativeName>
        <fullName evidence="1">Demethylmenaquinone methyltransferase</fullName>
    </alternativeName>
</protein>
<organism>
    <name type="scientific">Pasteurella multocida (strain Pm70)</name>
    <dbReference type="NCBI Taxonomy" id="272843"/>
    <lineage>
        <taxon>Bacteria</taxon>
        <taxon>Pseudomonadati</taxon>
        <taxon>Pseudomonadota</taxon>
        <taxon>Gammaproteobacteria</taxon>
        <taxon>Pasteurellales</taxon>
        <taxon>Pasteurellaceae</taxon>
        <taxon>Pasteurella</taxon>
    </lineage>
</organism>
<comment type="function">
    <text evidence="1">Methyltransferase required for the conversion of demethylmenaquinol (DMKH2) to menaquinol (MKH2) and the conversion of 2-polyprenyl-6-methoxy-1,4-benzoquinol (DDMQH2) to 2-polyprenyl-3-methyl-6-methoxy-1,4-benzoquinol (DMQH2).</text>
</comment>
<comment type="catalytic activity">
    <reaction evidence="1">
        <text>a 2-demethylmenaquinol + S-adenosyl-L-methionine = a menaquinol + S-adenosyl-L-homocysteine + H(+)</text>
        <dbReference type="Rhea" id="RHEA:42640"/>
        <dbReference type="Rhea" id="RHEA-COMP:9539"/>
        <dbReference type="Rhea" id="RHEA-COMP:9563"/>
        <dbReference type="ChEBI" id="CHEBI:15378"/>
        <dbReference type="ChEBI" id="CHEBI:18151"/>
        <dbReference type="ChEBI" id="CHEBI:55437"/>
        <dbReference type="ChEBI" id="CHEBI:57856"/>
        <dbReference type="ChEBI" id="CHEBI:59789"/>
        <dbReference type="EC" id="2.1.1.163"/>
    </reaction>
</comment>
<comment type="catalytic activity">
    <reaction evidence="1">
        <text>a 2-methoxy-6-(all-trans-polyprenyl)benzene-1,4-diol + S-adenosyl-L-methionine = a 5-methoxy-2-methyl-3-(all-trans-polyprenyl)benzene-1,4-diol + S-adenosyl-L-homocysteine + H(+)</text>
        <dbReference type="Rhea" id="RHEA:28286"/>
        <dbReference type="Rhea" id="RHEA-COMP:10858"/>
        <dbReference type="Rhea" id="RHEA-COMP:10859"/>
        <dbReference type="ChEBI" id="CHEBI:15378"/>
        <dbReference type="ChEBI" id="CHEBI:57856"/>
        <dbReference type="ChEBI" id="CHEBI:59789"/>
        <dbReference type="ChEBI" id="CHEBI:84166"/>
        <dbReference type="ChEBI" id="CHEBI:84167"/>
        <dbReference type="EC" id="2.1.1.201"/>
    </reaction>
</comment>
<comment type="pathway">
    <text evidence="1">Quinol/quinone metabolism; menaquinone biosynthesis; menaquinol from 1,4-dihydroxy-2-naphthoate: step 2/2.</text>
</comment>
<comment type="pathway">
    <text evidence="1">Cofactor biosynthesis; ubiquinone biosynthesis.</text>
</comment>
<comment type="similarity">
    <text evidence="1">Belongs to the class I-like SAM-binding methyltransferase superfamily. MenG/UbiE family.</text>
</comment>
<feature type="chain" id="PRO_0000193306" description="Ubiquinone/menaquinone biosynthesis C-methyltransferase UbiE">
    <location>
        <begin position="1"/>
        <end position="268"/>
    </location>
</feature>
<feature type="region of interest" description="Disordered" evidence="2">
    <location>
        <begin position="1"/>
        <end position="23"/>
    </location>
</feature>
<feature type="compositionally biased region" description="Polar residues" evidence="2">
    <location>
        <begin position="10"/>
        <end position="23"/>
    </location>
</feature>
<feature type="binding site" evidence="1">
    <location>
        <position position="91"/>
    </location>
    <ligand>
        <name>S-adenosyl-L-methionine</name>
        <dbReference type="ChEBI" id="CHEBI:59789"/>
    </ligand>
</feature>
<feature type="binding site" evidence="1">
    <location>
        <position position="112"/>
    </location>
    <ligand>
        <name>S-adenosyl-L-methionine</name>
        <dbReference type="ChEBI" id="CHEBI:59789"/>
    </ligand>
</feature>
<feature type="binding site" evidence="1">
    <location>
        <begin position="140"/>
        <end position="141"/>
    </location>
    <ligand>
        <name>S-adenosyl-L-methionine</name>
        <dbReference type="ChEBI" id="CHEBI:59789"/>
    </ligand>
</feature>
<feature type="binding site" evidence="1">
    <location>
        <position position="157"/>
    </location>
    <ligand>
        <name>S-adenosyl-L-methionine</name>
        <dbReference type="ChEBI" id="CHEBI:59789"/>
    </ligand>
</feature>
<evidence type="ECO:0000255" key="1">
    <source>
        <dbReference type="HAMAP-Rule" id="MF_01813"/>
    </source>
</evidence>
<evidence type="ECO:0000256" key="2">
    <source>
        <dbReference type="SAM" id="MobiDB-lite"/>
    </source>
</evidence>
<reference key="1">
    <citation type="journal article" date="2001" name="Proc. Natl. Acad. Sci. U.S.A.">
        <title>Complete genomic sequence of Pasteurella multocida Pm70.</title>
        <authorList>
            <person name="May B.J."/>
            <person name="Zhang Q."/>
            <person name="Li L.L."/>
            <person name="Paustian M.L."/>
            <person name="Whittam T.S."/>
            <person name="Kapur V."/>
        </authorList>
    </citation>
    <scope>NUCLEOTIDE SEQUENCE [LARGE SCALE GENOMIC DNA]</scope>
    <source>
        <strain>Pm70</strain>
    </source>
</reference>
<sequence>MTDQHAFATEQVQLDPTLSPTTEETTHFGFKTVAKSEKQKMVANVFHSVAGKYDLMNDLLSFGIHRVWKRFTIDCSGVRKGHKVLDLAGGTGDFTAKFSRLVGPSGEVILADINDSMLRVGREKLRNLGVVGNVNYVQANAEALPFPDNTFDCVIISFGLRNVTDKDKALRSMFRVLKPGGRLLVLEFSKPILDPLSKIYNFYSFNILPKIGEVVVNDSESYRYLAESIRMHPAQDVLKQMMIDAGFEQVNYYNLSAGIVALHRGYKF</sequence>
<keyword id="KW-0474">Menaquinone biosynthesis</keyword>
<keyword id="KW-0489">Methyltransferase</keyword>
<keyword id="KW-1185">Reference proteome</keyword>
<keyword id="KW-0949">S-adenosyl-L-methionine</keyword>
<keyword id="KW-0808">Transferase</keyword>
<keyword id="KW-0831">Ubiquinone biosynthesis</keyword>